<name>FMT_SALCH</name>
<accession>Q57J63</accession>
<feature type="initiator methionine" description="Removed" evidence="1">
    <location>
        <position position="1"/>
    </location>
</feature>
<feature type="chain" id="PRO_0000083038" description="Methionyl-tRNA formyltransferase">
    <location>
        <begin position="2"/>
        <end position="315"/>
    </location>
</feature>
<feature type="region of interest" description="N-terminal domain">
    <location>
        <begin position="2"/>
        <end position="189"/>
    </location>
</feature>
<feature type="region of interest" description="C-terminal domain">
    <location>
        <begin position="210"/>
        <end position="315"/>
    </location>
</feature>
<feature type="binding site" evidence="2">
    <location>
        <begin position="113"/>
        <end position="116"/>
    </location>
    <ligand>
        <name>(6S)-5,6,7,8-tetrahydrofolate</name>
        <dbReference type="ChEBI" id="CHEBI:57453"/>
    </ligand>
</feature>
<keyword id="KW-0648">Protein biosynthesis</keyword>
<keyword id="KW-0808">Transferase</keyword>
<reference key="1">
    <citation type="journal article" date="2005" name="Nucleic Acids Res.">
        <title>The genome sequence of Salmonella enterica serovar Choleraesuis, a highly invasive and resistant zoonotic pathogen.</title>
        <authorList>
            <person name="Chiu C.-H."/>
            <person name="Tang P."/>
            <person name="Chu C."/>
            <person name="Hu S."/>
            <person name="Bao Q."/>
            <person name="Yu J."/>
            <person name="Chou Y.-Y."/>
            <person name="Wang H.-S."/>
            <person name="Lee Y.-S."/>
        </authorList>
    </citation>
    <scope>NUCLEOTIDE SEQUENCE [LARGE SCALE GENOMIC DNA]</scope>
    <source>
        <strain>SC-B67</strain>
    </source>
</reference>
<evidence type="ECO:0000250" key="1"/>
<evidence type="ECO:0000255" key="2">
    <source>
        <dbReference type="HAMAP-Rule" id="MF_00182"/>
    </source>
</evidence>
<evidence type="ECO:0000305" key="3"/>
<comment type="function">
    <text evidence="2">Attaches a formyl group to the free amino group of methionyl-tRNA(fMet). The formyl group appears to play a dual role in the initiator identity of N-formylmethionyl-tRNA by promoting its recognition by IF2 and preventing the misappropriation of this tRNA by the elongation apparatus.</text>
</comment>
<comment type="catalytic activity">
    <reaction evidence="2">
        <text>L-methionyl-tRNA(fMet) + (6R)-10-formyltetrahydrofolate = N-formyl-L-methionyl-tRNA(fMet) + (6S)-5,6,7,8-tetrahydrofolate + H(+)</text>
        <dbReference type="Rhea" id="RHEA:24380"/>
        <dbReference type="Rhea" id="RHEA-COMP:9952"/>
        <dbReference type="Rhea" id="RHEA-COMP:9953"/>
        <dbReference type="ChEBI" id="CHEBI:15378"/>
        <dbReference type="ChEBI" id="CHEBI:57453"/>
        <dbReference type="ChEBI" id="CHEBI:78530"/>
        <dbReference type="ChEBI" id="CHEBI:78844"/>
        <dbReference type="ChEBI" id="CHEBI:195366"/>
        <dbReference type="EC" id="2.1.2.9"/>
    </reaction>
</comment>
<comment type="similarity">
    <text evidence="2 3">Belongs to the Fmt family.</text>
</comment>
<gene>
    <name evidence="2" type="primary">fmt</name>
    <name type="ordered locus">SCH_3343</name>
</gene>
<organism>
    <name type="scientific">Salmonella choleraesuis (strain SC-B67)</name>
    <dbReference type="NCBI Taxonomy" id="321314"/>
    <lineage>
        <taxon>Bacteria</taxon>
        <taxon>Pseudomonadati</taxon>
        <taxon>Pseudomonadota</taxon>
        <taxon>Gammaproteobacteria</taxon>
        <taxon>Enterobacterales</taxon>
        <taxon>Enterobacteriaceae</taxon>
        <taxon>Salmonella</taxon>
    </lineage>
</organism>
<protein>
    <recommendedName>
        <fullName evidence="2">Methionyl-tRNA formyltransferase</fullName>
        <ecNumber evidence="2">2.1.2.9</ecNumber>
    </recommendedName>
</protein>
<sequence>MSDSLRIIFAGTPDFAARHLDALLTSGHNVVGVFTQPDRPAGRGKKLMPSPVKVLAEEKGLPVFQPVSLRPQENQHLVADLHADVMVVVAYGLILPKAVLDMPRLGCINVHGSLLPRWRGAAPIQRSLWAGDAETGVTIMQMDVGLDTGDMLYKLACPITAEDTSGSLYNKLAELGPQGLITTLKQLADGTATPEAQNEALVTHAEKLSKEEARIDWSLSAAQLERCIRAFNPWPMSWLEIDGQPVKVWQASVIEDATQSLPGTILAATKQGIQVATGKGILNLLSLQPAGKKAMSAQDLLNSRREWFIPGNRLA</sequence>
<proteinExistence type="inferred from homology"/>
<dbReference type="EC" id="2.1.2.9" evidence="2"/>
<dbReference type="EMBL" id="AE017220">
    <property type="protein sequence ID" value="AAX67249.1"/>
    <property type="molecule type" value="Genomic_DNA"/>
</dbReference>
<dbReference type="RefSeq" id="WP_001285165.1">
    <property type="nucleotide sequence ID" value="NC_006905.1"/>
</dbReference>
<dbReference type="SMR" id="Q57J63"/>
<dbReference type="KEGG" id="sec:SCH_3343"/>
<dbReference type="HOGENOM" id="CLU_033347_1_2_6"/>
<dbReference type="Proteomes" id="UP000000538">
    <property type="component" value="Chromosome"/>
</dbReference>
<dbReference type="GO" id="GO:0005829">
    <property type="term" value="C:cytosol"/>
    <property type="evidence" value="ECO:0007669"/>
    <property type="project" value="TreeGrafter"/>
</dbReference>
<dbReference type="GO" id="GO:0004479">
    <property type="term" value="F:methionyl-tRNA formyltransferase activity"/>
    <property type="evidence" value="ECO:0007669"/>
    <property type="project" value="UniProtKB-UniRule"/>
</dbReference>
<dbReference type="CDD" id="cd08646">
    <property type="entry name" value="FMT_core_Met-tRNA-FMT_N"/>
    <property type="match status" value="1"/>
</dbReference>
<dbReference type="CDD" id="cd08704">
    <property type="entry name" value="Met_tRNA_FMT_C"/>
    <property type="match status" value="1"/>
</dbReference>
<dbReference type="FunFam" id="3.10.25.10:FF:000001">
    <property type="entry name" value="Methionyl-tRNA formyltransferase"/>
    <property type="match status" value="1"/>
</dbReference>
<dbReference type="FunFam" id="3.40.50.170:FF:000003">
    <property type="entry name" value="Methionyl-tRNA formyltransferase"/>
    <property type="match status" value="1"/>
</dbReference>
<dbReference type="Gene3D" id="3.10.25.10">
    <property type="entry name" value="Formyl transferase, C-terminal domain"/>
    <property type="match status" value="1"/>
</dbReference>
<dbReference type="Gene3D" id="3.40.50.170">
    <property type="entry name" value="Formyl transferase, N-terminal domain"/>
    <property type="match status" value="1"/>
</dbReference>
<dbReference type="HAMAP" id="MF_00182">
    <property type="entry name" value="Formyl_trans"/>
    <property type="match status" value="1"/>
</dbReference>
<dbReference type="InterPro" id="IPR005794">
    <property type="entry name" value="Fmt"/>
</dbReference>
<dbReference type="InterPro" id="IPR005793">
    <property type="entry name" value="Formyl_trans_C"/>
</dbReference>
<dbReference type="InterPro" id="IPR037022">
    <property type="entry name" value="Formyl_trans_C_sf"/>
</dbReference>
<dbReference type="InterPro" id="IPR002376">
    <property type="entry name" value="Formyl_transf_N"/>
</dbReference>
<dbReference type="InterPro" id="IPR036477">
    <property type="entry name" value="Formyl_transf_N_sf"/>
</dbReference>
<dbReference type="InterPro" id="IPR011034">
    <property type="entry name" value="Formyl_transferase-like_C_sf"/>
</dbReference>
<dbReference type="InterPro" id="IPR001555">
    <property type="entry name" value="GART_AS"/>
</dbReference>
<dbReference type="InterPro" id="IPR044135">
    <property type="entry name" value="Met-tRNA-FMT_C"/>
</dbReference>
<dbReference type="InterPro" id="IPR041711">
    <property type="entry name" value="Met-tRNA-FMT_N"/>
</dbReference>
<dbReference type="NCBIfam" id="TIGR00460">
    <property type="entry name" value="fmt"/>
    <property type="match status" value="1"/>
</dbReference>
<dbReference type="PANTHER" id="PTHR11138">
    <property type="entry name" value="METHIONYL-TRNA FORMYLTRANSFERASE"/>
    <property type="match status" value="1"/>
</dbReference>
<dbReference type="PANTHER" id="PTHR11138:SF5">
    <property type="entry name" value="METHIONYL-TRNA FORMYLTRANSFERASE, MITOCHONDRIAL"/>
    <property type="match status" value="1"/>
</dbReference>
<dbReference type="Pfam" id="PF02911">
    <property type="entry name" value="Formyl_trans_C"/>
    <property type="match status" value="1"/>
</dbReference>
<dbReference type="Pfam" id="PF00551">
    <property type="entry name" value="Formyl_trans_N"/>
    <property type="match status" value="1"/>
</dbReference>
<dbReference type="SUPFAM" id="SSF50486">
    <property type="entry name" value="FMT C-terminal domain-like"/>
    <property type="match status" value="1"/>
</dbReference>
<dbReference type="SUPFAM" id="SSF53328">
    <property type="entry name" value="Formyltransferase"/>
    <property type="match status" value="1"/>
</dbReference>
<dbReference type="PROSITE" id="PS00373">
    <property type="entry name" value="GART"/>
    <property type="match status" value="1"/>
</dbReference>